<proteinExistence type="evidence at protein level"/>
<dbReference type="EMBL" id="M15841">
    <property type="protein sequence ID" value="AAA36796.1"/>
    <property type="molecule type" value="mRNA"/>
</dbReference>
<dbReference type="EMBL" id="AK313004">
    <property type="protein sequence ID" value="BAG35840.1"/>
    <property type="molecule type" value="mRNA"/>
</dbReference>
<dbReference type="EMBL" id="AL034428">
    <property type="status" value="NOT_ANNOTATED_CDS"/>
    <property type="molecule type" value="Genomic_DNA"/>
</dbReference>
<dbReference type="EMBL" id="CH471133">
    <property type="protein sequence ID" value="EAX10284.1"/>
    <property type="molecule type" value="Genomic_DNA"/>
</dbReference>
<dbReference type="EMBL" id="CH471133">
    <property type="protein sequence ID" value="EAX10285.1"/>
    <property type="molecule type" value="Genomic_DNA"/>
</dbReference>
<dbReference type="EMBL" id="BC018022">
    <property type="protein sequence ID" value="AAH18022.1"/>
    <property type="molecule type" value="mRNA"/>
</dbReference>
<dbReference type="EMBL" id="BC036737">
    <property type="protein sequence ID" value="AAH36737.1"/>
    <property type="molecule type" value="mRNA"/>
</dbReference>
<dbReference type="CCDS" id="CCDS13123.1"/>
<dbReference type="PIR" id="A25910">
    <property type="entry name" value="A25910"/>
</dbReference>
<dbReference type="RefSeq" id="NP_003083.1">
    <property type="nucleotide sequence ID" value="NM_003092.5"/>
</dbReference>
<dbReference type="RefSeq" id="NP_937863.1">
    <property type="nucleotide sequence ID" value="NM_198220.3"/>
</dbReference>
<dbReference type="PDB" id="1A9N">
    <property type="method" value="X-ray"/>
    <property type="resolution" value="2.38 A"/>
    <property type="chains" value="B/D=1-96"/>
</dbReference>
<dbReference type="PDB" id="5MQF">
    <property type="method" value="EM"/>
    <property type="resolution" value="5.90 A"/>
    <property type="chains" value="X=1-225"/>
</dbReference>
<dbReference type="PDB" id="5O9Z">
    <property type="method" value="EM"/>
    <property type="resolution" value="4.50 A"/>
    <property type="chains" value="1=1-225"/>
</dbReference>
<dbReference type="PDB" id="5XJC">
    <property type="method" value="EM"/>
    <property type="resolution" value="3.60 A"/>
    <property type="chains" value="p=1-225"/>
</dbReference>
<dbReference type="PDB" id="5YZG">
    <property type="method" value="EM"/>
    <property type="resolution" value="4.10 A"/>
    <property type="chains" value="p=1-225"/>
</dbReference>
<dbReference type="PDB" id="5Z56">
    <property type="method" value="EM"/>
    <property type="resolution" value="5.10 A"/>
    <property type="chains" value="p=1-225"/>
</dbReference>
<dbReference type="PDB" id="5Z57">
    <property type="method" value="EM"/>
    <property type="resolution" value="6.50 A"/>
    <property type="chains" value="p=1-225"/>
</dbReference>
<dbReference type="PDB" id="5Z58">
    <property type="method" value="EM"/>
    <property type="resolution" value="4.90 A"/>
    <property type="chains" value="p=1-225"/>
</dbReference>
<dbReference type="PDB" id="6AH0">
    <property type="method" value="EM"/>
    <property type="resolution" value="5.70 A"/>
    <property type="chains" value="p=1-225"/>
</dbReference>
<dbReference type="PDB" id="6AHD">
    <property type="method" value="EM"/>
    <property type="resolution" value="3.80 A"/>
    <property type="chains" value="p=1-225"/>
</dbReference>
<dbReference type="PDB" id="6FF7">
    <property type="method" value="EM"/>
    <property type="resolution" value="4.50 A"/>
    <property type="chains" value="X=1-225"/>
</dbReference>
<dbReference type="PDB" id="6ICZ">
    <property type="method" value="EM"/>
    <property type="resolution" value="3.00 A"/>
    <property type="chains" value="p=1-225"/>
</dbReference>
<dbReference type="PDB" id="6ID0">
    <property type="method" value="EM"/>
    <property type="resolution" value="2.90 A"/>
    <property type="chains" value="p=1-225"/>
</dbReference>
<dbReference type="PDB" id="6ID1">
    <property type="method" value="EM"/>
    <property type="resolution" value="2.86 A"/>
    <property type="chains" value="p=1-225"/>
</dbReference>
<dbReference type="PDB" id="6QDV">
    <property type="method" value="EM"/>
    <property type="resolution" value="3.30 A"/>
    <property type="chains" value="Y=3-94"/>
</dbReference>
<dbReference type="PDB" id="6QX9">
    <property type="method" value="EM"/>
    <property type="resolution" value="3.28 A"/>
    <property type="chains" value="2B=1-225"/>
</dbReference>
<dbReference type="PDB" id="6Y53">
    <property type="method" value="EM"/>
    <property type="resolution" value="7.10 A"/>
    <property type="chains" value="b=1-225"/>
</dbReference>
<dbReference type="PDB" id="6Y5Q">
    <property type="method" value="EM"/>
    <property type="resolution" value="7.10 A"/>
    <property type="chains" value="b=1-225"/>
</dbReference>
<dbReference type="PDB" id="7A5P">
    <property type="method" value="EM"/>
    <property type="resolution" value="5.00 A"/>
    <property type="chains" value="X=1-225"/>
</dbReference>
<dbReference type="PDB" id="7ABG">
    <property type="method" value="EM"/>
    <property type="resolution" value="7.80 A"/>
    <property type="chains" value="B=1-225"/>
</dbReference>
<dbReference type="PDB" id="7ABI">
    <property type="method" value="EM"/>
    <property type="resolution" value="8.00 A"/>
    <property type="chains" value="B=1-225"/>
</dbReference>
<dbReference type="PDB" id="7EVO">
    <property type="method" value="EM"/>
    <property type="resolution" value="2.50 A"/>
    <property type="chains" value="G=1-225"/>
</dbReference>
<dbReference type="PDB" id="7VPX">
    <property type="method" value="EM"/>
    <property type="resolution" value="3.00 A"/>
    <property type="chains" value="G=1-225"/>
</dbReference>
<dbReference type="PDB" id="7W59">
    <property type="method" value="EM"/>
    <property type="resolution" value="3.60 A"/>
    <property type="chains" value="p=1-225"/>
</dbReference>
<dbReference type="PDB" id="7W5A">
    <property type="method" value="EM"/>
    <property type="resolution" value="3.60 A"/>
    <property type="chains" value="p=1-225"/>
</dbReference>
<dbReference type="PDB" id="7W5B">
    <property type="method" value="EM"/>
    <property type="resolution" value="4.30 A"/>
    <property type="chains" value="p=1-225"/>
</dbReference>
<dbReference type="PDB" id="8C6J">
    <property type="method" value="EM"/>
    <property type="resolution" value="2.80 A"/>
    <property type="chains" value="Y=1-225"/>
</dbReference>
<dbReference type="PDB" id="8CH6">
    <property type="method" value="EM"/>
    <property type="resolution" value="5.90 A"/>
    <property type="chains" value="s=1-225"/>
</dbReference>
<dbReference type="PDB" id="8H6E">
    <property type="method" value="EM"/>
    <property type="resolution" value="3.20 A"/>
    <property type="chains" value="2C=1-225"/>
</dbReference>
<dbReference type="PDB" id="8H6J">
    <property type="method" value="EM"/>
    <property type="resolution" value="3.25 A"/>
    <property type="chains" value="2C=1-225"/>
</dbReference>
<dbReference type="PDB" id="8H6K">
    <property type="method" value="EM"/>
    <property type="resolution" value="2.70 A"/>
    <property type="chains" value="2C=1-225"/>
</dbReference>
<dbReference type="PDB" id="8H6L">
    <property type="method" value="EM"/>
    <property type="resolution" value="2.60 A"/>
    <property type="chains" value="2C=1-225"/>
</dbReference>
<dbReference type="PDB" id="8HK1">
    <property type="method" value="EM"/>
    <property type="resolution" value="2.70 A"/>
    <property type="chains" value="G=1-225"/>
</dbReference>
<dbReference type="PDB" id="8I0P">
    <property type="method" value="EM"/>
    <property type="resolution" value="3.40 A"/>
    <property type="chains" value="p=1-225"/>
</dbReference>
<dbReference type="PDB" id="8I0R">
    <property type="method" value="EM"/>
    <property type="resolution" value="3.00 A"/>
    <property type="chains" value="p=1-225"/>
</dbReference>
<dbReference type="PDB" id="8I0S">
    <property type="method" value="EM"/>
    <property type="resolution" value="4.20 A"/>
    <property type="chains" value="p=1-225"/>
</dbReference>
<dbReference type="PDB" id="8I0T">
    <property type="method" value="EM"/>
    <property type="resolution" value="3.00 A"/>
    <property type="chains" value="p=1-225"/>
</dbReference>
<dbReference type="PDB" id="8I0U">
    <property type="method" value="EM"/>
    <property type="resolution" value="3.30 A"/>
    <property type="chains" value="p=1-225"/>
</dbReference>
<dbReference type="PDB" id="8I0V">
    <property type="method" value="EM"/>
    <property type="resolution" value="3.00 A"/>
    <property type="chains" value="p=1-225"/>
</dbReference>
<dbReference type="PDB" id="8I0W">
    <property type="method" value="EM"/>
    <property type="resolution" value="3.40 A"/>
    <property type="chains" value="p=1-225"/>
</dbReference>
<dbReference type="PDB" id="8QO9">
    <property type="method" value="EM"/>
    <property type="resolution" value="5.29 A"/>
    <property type="chains" value="2B=1-225"/>
</dbReference>
<dbReference type="PDB" id="8QXD">
    <property type="method" value="EM"/>
    <property type="resolution" value="9.60 A"/>
    <property type="chains" value="2B=1-225"/>
</dbReference>
<dbReference type="PDB" id="8QZS">
    <property type="method" value="EM"/>
    <property type="resolution" value="4.10 A"/>
    <property type="chains" value="2B=1-225"/>
</dbReference>
<dbReference type="PDB" id="8R08">
    <property type="method" value="EM"/>
    <property type="resolution" value="6.10 A"/>
    <property type="chains" value="2B=1-225"/>
</dbReference>
<dbReference type="PDB" id="8R09">
    <property type="method" value="EM"/>
    <property type="resolution" value="4.30 A"/>
    <property type="chains" value="2B=1-225"/>
</dbReference>
<dbReference type="PDB" id="8R0A">
    <property type="method" value="EM"/>
    <property type="resolution" value="5.80 A"/>
    <property type="chains" value="2B=1-225"/>
</dbReference>
<dbReference type="PDB" id="8R0B">
    <property type="method" value="EM"/>
    <property type="resolution" value="4.40 A"/>
    <property type="chains" value="2B=1-225"/>
</dbReference>
<dbReference type="PDB" id="8RM5">
    <property type="method" value="EM"/>
    <property type="resolution" value="6.90 A"/>
    <property type="chains" value="2B=1-225"/>
</dbReference>
<dbReference type="PDB" id="9FMD">
    <property type="method" value="EM"/>
    <property type="resolution" value="3.30 A"/>
    <property type="chains" value="p=1-225"/>
</dbReference>
<dbReference type="PDBsum" id="1A9N"/>
<dbReference type="PDBsum" id="5MQF"/>
<dbReference type="PDBsum" id="5O9Z"/>
<dbReference type="PDBsum" id="5XJC"/>
<dbReference type="PDBsum" id="5YZG"/>
<dbReference type="PDBsum" id="5Z56"/>
<dbReference type="PDBsum" id="5Z57"/>
<dbReference type="PDBsum" id="5Z58"/>
<dbReference type="PDBsum" id="6AH0"/>
<dbReference type="PDBsum" id="6AHD"/>
<dbReference type="PDBsum" id="6FF7"/>
<dbReference type="PDBsum" id="6ICZ"/>
<dbReference type="PDBsum" id="6ID0"/>
<dbReference type="PDBsum" id="6ID1"/>
<dbReference type="PDBsum" id="6QDV"/>
<dbReference type="PDBsum" id="6QX9"/>
<dbReference type="PDBsum" id="6Y53"/>
<dbReference type="PDBsum" id="6Y5Q"/>
<dbReference type="PDBsum" id="7A5P"/>
<dbReference type="PDBsum" id="7ABG"/>
<dbReference type="PDBsum" id="7ABI"/>
<dbReference type="PDBsum" id="7EVO"/>
<dbReference type="PDBsum" id="7VPX"/>
<dbReference type="PDBsum" id="7W59"/>
<dbReference type="PDBsum" id="7W5A"/>
<dbReference type="PDBsum" id="7W5B"/>
<dbReference type="PDBsum" id="8C6J"/>
<dbReference type="PDBsum" id="8CH6"/>
<dbReference type="PDBsum" id="8H6E"/>
<dbReference type="PDBsum" id="8H6J"/>
<dbReference type="PDBsum" id="8H6K"/>
<dbReference type="PDBsum" id="8H6L"/>
<dbReference type="PDBsum" id="8HK1"/>
<dbReference type="PDBsum" id="8I0P"/>
<dbReference type="PDBsum" id="8I0R"/>
<dbReference type="PDBsum" id="8I0S"/>
<dbReference type="PDBsum" id="8I0T"/>
<dbReference type="PDBsum" id="8I0U"/>
<dbReference type="PDBsum" id="8I0V"/>
<dbReference type="PDBsum" id="8I0W"/>
<dbReference type="PDBsum" id="8QO9"/>
<dbReference type="PDBsum" id="8QXD"/>
<dbReference type="PDBsum" id="8QZS"/>
<dbReference type="PDBsum" id="8R08"/>
<dbReference type="PDBsum" id="8R09"/>
<dbReference type="PDBsum" id="8R0A"/>
<dbReference type="PDBsum" id="8R0B"/>
<dbReference type="PDBsum" id="8RM5"/>
<dbReference type="PDBsum" id="9FMD"/>
<dbReference type="EMDB" id="EMD-10689"/>
<dbReference type="EMDB" id="EMD-11695"/>
<dbReference type="EMDB" id="EMD-11697"/>
<dbReference type="EMDB" id="EMD-16452"/>
<dbReference type="EMDB" id="EMD-16658"/>
<dbReference type="EMDB" id="EMD-18529"/>
<dbReference type="EMDB" id="EMD-18718"/>
<dbReference type="EMDB" id="EMD-18781"/>
<dbReference type="EMDB" id="EMD-18786"/>
<dbReference type="EMDB" id="EMD-18787"/>
<dbReference type="EMDB" id="EMD-18788"/>
<dbReference type="EMDB" id="EMD-18789"/>
<dbReference type="EMDB" id="EMD-19349"/>
<dbReference type="EMDB" id="EMD-31334"/>
<dbReference type="EMDB" id="EMD-32074"/>
<dbReference type="EMDB" id="EMD-32317"/>
<dbReference type="EMDB" id="EMD-32319"/>
<dbReference type="EMDB" id="EMD-32321"/>
<dbReference type="EMDB" id="EMD-34500"/>
<dbReference type="EMDB" id="EMD-34505"/>
<dbReference type="EMDB" id="EMD-34507"/>
<dbReference type="EMDB" id="EMD-34508"/>
<dbReference type="EMDB" id="EMD-34841"/>
<dbReference type="EMDB" id="EMD-35105"/>
<dbReference type="EMDB" id="EMD-35107"/>
<dbReference type="EMDB" id="EMD-35108"/>
<dbReference type="EMDB" id="EMD-35109"/>
<dbReference type="EMDB" id="EMD-35110"/>
<dbReference type="EMDB" id="EMD-35111"/>
<dbReference type="EMDB" id="EMD-35113"/>
<dbReference type="EMDB" id="EMD-3545"/>
<dbReference type="EMDB" id="EMD-3766"/>
<dbReference type="EMDB" id="EMD-4525"/>
<dbReference type="EMDB" id="EMD-4665"/>
<dbReference type="EMDB" id="EMD-6721"/>
<dbReference type="EMDB" id="EMD-6864"/>
<dbReference type="EMDB" id="EMD-6889"/>
<dbReference type="EMDB" id="EMD-6890"/>
<dbReference type="EMDB" id="EMD-6891"/>
<dbReference type="EMDB" id="EMD-9621"/>
<dbReference type="EMDB" id="EMD-9624"/>
<dbReference type="EMDB" id="EMD-9645"/>
<dbReference type="EMDB" id="EMD-9646"/>
<dbReference type="EMDB" id="EMD-9647"/>
<dbReference type="SMR" id="P08579"/>
<dbReference type="BioGRID" id="112513">
    <property type="interactions" value="263"/>
</dbReference>
<dbReference type="ComplexPortal" id="CPX-2539">
    <property type="entry name" value="U2 small nuclear ribonucleoprotein complex"/>
</dbReference>
<dbReference type="CORUM" id="P08579"/>
<dbReference type="FunCoup" id="P08579">
    <property type="interactions" value="3407"/>
</dbReference>
<dbReference type="IntAct" id="P08579">
    <property type="interactions" value="159"/>
</dbReference>
<dbReference type="MINT" id="P08579"/>
<dbReference type="STRING" id="9606.ENSP00000246071"/>
<dbReference type="GlyCosmos" id="P08579">
    <property type="glycosylation" value="1 site, 1 glycan"/>
</dbReference>
<dbReference type="GlyGen" id="P08579">
    <property type="glycosylation" value="2 sites, 1 N-linked glycan (1 site), 1 O-linked glycan (1 site)"/>
</dbReference>
<dbReference type="iPTMnet" id="P08579"/>
<dbReference type="PhosphoSitePlus" id="P08579"/>
<dbReference type="BioMuta" id="SNRPB2"/>
<dbReference type="DMDM" id="134095"/>
<dbReference type="jPOST" id="P08579"/>
<dbReference type="MassIVE" id="P08579"/>
<dbReference type="PaxDb" id="9606-ENSP00000246071"/>
<dbReference type="PeptideAtlas" id="P08579"/>
<dbReference type="ProteomicsDB" id="52127"/>
<dbReference type="Pumba" id="P08579"/>
<dbReference type="TopDownProteomics" id="P08579"/>
<dbReference type="Antibodypedia" id="24425">
    <property type="antibodies" value="246 antibodies from 23 providers"/>
</dbReference>
<dbReference type="DNASU" id="6629"/>
<dbReference type="Ensembl" id="ENST00000246071.8">
    <property type="protein sequence ID" value="ENSP00000246071.6"/>
    <property type="gene ID" value="ENSG00000125870.11"/>
</dbReference>
<dbReference type="Ensembl" id="ENST00000377943.9">
    <property type="protein sequence ID" value="ENSP00000367178.5"/>
    <property type="gene ID" value="ENSG00000125870.11"/>
</dbReference>
<dbReference type="GeneID" id="6629"/>
<dbReference type="KEGG" id="hsa:6629"/>
<dbReference type="MANE-Select" id="ENST00000246071.8">
    <property type="protein sequence ID" value="ENSP00000246071.6"/>
    <property type="RefSeq nucleotide sequence ID" value="NM_003092.5"/>
    <property type="RefSeq protein sequence ID" value="NP_003083.1"/>
</dbReference>
<dbReference type="UCSC" id="uc002wph.3">
    <property type="organism name" value="human"/>
</dbReference>
<dbReference type="AGR" id="HGNC:11155"/>
<dbReference type="CTD" id="6629"/>
<dbReference type="GeneCards" id="SNRPB2"/>
<dbReference type="HGNC" id="HGNC:11155">
    <property type="gene designation" value="SNRPB2"/>
</dbReference>
<dbReference type="HPA" id="ENSG00000125870">
    <property type="expression patterns" value="Low tissue specificity"/>
</dbReference>
<dbReference type="MIM" id="603520">
    <property type="type" value="gene"/>
</dbReference>
<dbReference type="neXtProt" id="NX_P08579"/>
<dbReference type="OpenTargets" id="ENSG00000125870"/>
<dbReference type="PharmGKB" id="PA35996"/>
<dbReference type="VEuPathDB" id="HostDB:ENSG00000125870"/>
<dbReference type="eggNOG" id="KOG4206">
    <property type="taxonomic scope" value="Eukaryota"/>
</dbReference>
<dbReference type="GeneTree" id="ENSGT00390000007046"/>
<dbReference type="HOGENOM" id="CLU_041869_1_1_1"/>
<dbReference type="InParanoid" id="P08579"/>
<dbReference type="OMA" id="LKKGWVM"/>
<dbReference type="OrthoDB" id="277802at2759"/>
<dbReference type="PAN-GO" id="P08579">
    <property type="GO annotations" value="3 GO annotations based on evolutionary models"/>
</dbReference>
<dbReference type="PhylomeDB" id="P08579"/>
<dbReference type="TreeFam" id="TF313834"/>
<dbReference type="PathwayCommons" id="P08579"/>
<dbReference type="Reactome" id="R-HSA-72163">
    <property type="pathway name" value="mRNA Splicing - Major Pathway"/>
</dbReference>
<dbReference type="SignaLink" id="P08579"/>
<dbReference type="SIGNOR" id="P08579"/>
<dbReference type="BioGRID-ORCS" id="6629">
    <property type="hits" value="434 hits in 1151 CRISPR screens"/>
</dbReference>
<dbReference type="CD-CODE" id="6F24707C">
    <property type="entry name" value="Cajal body"/>
</dbReference>
<dbReference type="CD-CODE" id="804901D1">
    <property type="entry name" value="Nuclear speckle"/>
</dbReference>
<dbReference type="ChiTaRS" id="SNRPB2">
    <property type="organism name" value="human"/>
</dbReference>
<dbReference type="EvolutionaryTrace" id="P08579"/>
<dbReference type="GeneWiki" id="SNRPB2"/>
<dbReference type="GenomeRNAi" id="6629"/>
<dbReference type="Pharos" id="P08579">
    <property type="development level" value="Tbio"/>
</dbReference>
<dbReference type="PRO" id="PR:P08579"/>
<dbReference type="Proteomes" id="UP000005640">
    <property type="component" value="Chromosome 20"/>
</dbReference>
<dbReference type="RNAct" id="P08579">
    <property type="molecule type" value="protein"/>
</dbReference>
<dbReference type="Bgee" id="ENSG00000125870">
    <property type="expression patterns" value="Expressed in oocyte and 214 other cell types or tissues"/>
</dbReference>
<dbReference type="GO" id="GO:0071013">
    <property type="term" value="C:catalytic step 2 spliceosome"/>
    <property type="evidence" value="ECO:0000314"/>
    <property type="project" value="UniProtKB"/>
</dbReference>
<dbReference type="GO" id="GO:0036464">
    <property type="term" value="C:cytoplasmic ribonucleoprotein granule"/>
    <property type="evidence" value="ECO:0000314"/>
    <property type="project" value="HPA"/>
</dbReference>
<dbReference type="GO" id="GO:0001650">
    <property type="term" value="C:fibrillar center"/>
    <property type="evidence" value="ECO:0000314"/>
    <property type="project" value="HPA"/>
</dbReference>
<dbReference type="GO" id="GO:0016607">
    <property type="term" value="C:nuclear speck"/>
    <property type="evidence" value="ECO:0000314"/>
    <property type="project" value="HPA"/>
</dbReference>
<dbReference type="GO" id="GO:0005654">
    <property type="term" value="C:nucleoplasm"/>
    <property type="evidence" value="ECO:0000304"/>
    <property type="project" value="Reactome"/>
</dbReference>
<dbReference type="GO" id="GO:0005634">
    <property type="term" value="C:nucleus"/>
    <property type="evidence" value="ECO:0000314"/>
    <property type="project" value="UniProtKB"/>
</dbReference>
<dbReference type="GO" id="GO:0005681">
    <property type="term" value="C:spliceosomal complex"/>
    <property type="evidence" value="ECO:0000314"/>
    <property type="project" value="HGNC-UCL"/>
</dbReference>
<dbReference type="GO" id="GO:0005685">
    <property type="term" value="C:U1 snRNP"/>
    <property type="evidence" value="ECO:0000318"/>
    <property type="project" value="GO_Central"/>
</dbReference>
<dbReference type="GO" id="GO:0005686">
    <property type="term" value="C:U2 snRNP"/>
    <property type="evidence" value="ECO:0000314"/>
    <property type="project" value="GO_Central"/>
</dbReference>
<dbReference type="GO" id="GO:0071007">
    <property type="term" value="C:U2-type catalytic step 2 spliceosome"/>
    <property type="evidence" value="ECO:0000314"/>
    <property type="project" value="UniProtKB"/>
</dbReference>
<dbReference type="GO" id="GO:0071005">
    <property type="term" value="C:U2-type precatalytic spliceosome"/>
    <property type="evidence" value="ECO:0000314"/>
    <property type="project" value="UniProtKB"/>
</dbReference>
<dbReference type="GO" id="GO:0005684">
    <property type="term" value="C:U2-type spliceosomal complex"/>
    <property type="evidence" value="ECO:0000314"/>
    <property type="project" value="UniProtKB"/>
</dbReference>
<dbReference type="GO" id="GO:0030619">
    <property type="term" value="F:U1 snRNA binding"/>
    <property type="evidence" value="ECO:0000318"/>
    <property type="project" value="GO_Central"/>
</dbReference>
<dbReference type="GO" id="GO:0000398">
    <property type="term" value="P:mRNA splicing, via spliceosome"/>
    <property type="evidence" value="ECO:0000314"/>
    <property type="project" value="UniProtKB"/>
</dbReference>
<dbReference type="GO" id="GO:1903241">
    <property type="term" value="P:U2-type prespliceosome assembly"/>
    <property type="evidence" value="ECO:0000303"/>
    <property type="project" value="ComplexPortal"/>
</dbReference>
<dbReference type="CDD" id="cd12478">
    <property type="entry name" value="RRM1_U2B"/>
    <property type="match status" value="1"/>
</dbReference>
<dbReference type="CDD" id="cd12481">
    <property type="entry name" value="RRM2_U2B"/>
    <property type="match status" value="1"/>
</dbReference>
<dbReference type="FunFam" id="3.30.70.330:FF:000039">
    <property type="entry name" value="U1 small nuclear ribonucleoprotein A"/>
    <property type="match status" value="1"/>
</dbReference>
<dbReference type="FunFam" id="3.30.70.330:FF:000029">
    <property type="entry name" value="U2 small nuclear ribonucleoprotein B"/>
    <property type="match status" value="1"/>
</dbReference>
<dbReference type="Gene3D" id="3.30.70.330">
    <property type="match status" value="2"/>
</dbReference>
<dbReference type="InterPro" id="IPR012677">
    <property type="entry name" value="Nucleotide-bd_a/b_plait_sf"/>
</dbReference>
<dbReference type="InterPro" id="IPR035979">
    <property type="entry name" value="RBD_domain_sf"/>
</dbReference>
<dbReference type="InterPro" id="IPR000504">
    <property type="entry name" value="RRM_dom"/>
</dbReference>
<dbReference type="InterPro" id="IPR034564">
    <property type="entry name" value="U2B''_RRM1"/>
</dbReference>
<dbReference type="InterPro" id="IPR034562">
    <property type="entry name" value="U2B''_RRM2"/>
</dbReference>
<dbReference type="PANTHER" id="PTHR10501">
    <property type="entry name" value="U1 SMALL NUCLEAR RIBONUCLEOPROTEIN A/U2 SMALL NUCLEAR RIBONUCLEOPROTEIN B"/>
    <property type="match status" value="1"/>
</dbReference>
<dbReference type="Pfam" id="PF00076">
    <property type="entry name" value="RRM_1"/>
    <property type="match status" value="2"/>
</dbReference>
<dbReference type="SMART" id="SM00360">
    <property type="entry name" value="RRM"/>
    <property type="match status" value="2"/>
</dbReference>
<dbReference type="SUPFAM" id="SSF54928">
    <property type="entry name" value="RNA-binding domain, RBD"/>
    <property type="match status" value="1"/>
</dbReference>
<dbReference type="PROSITE" id="PS50102">
    <property type="entry name" value="RRM"/>
    <property type="match status" value="2"/>
</dbReference>
<sequence length="225" mass="25486">MDIRPNHTIYINNMNDKIKKEELKRSLYALFSQFGHVVDIVALKTMKMRGQAFVIFKELGSSTNALRQLQGFPFYGKPMRIQYAKTDSDIISKMRGTFADKEKKKEKKKAKTVEQTATTTNKKPGQGTPNSANTQGNSTPNPQVPDYPPNYILFLNNLPEETNEMMLSMLFNQFPGFKEVRLVPGRHDIAFVEFENDGQAGAARDALQGFKITPSHAMKITYAKK</sequence>
<name>RU2B_HUMAN</name>
<comment type="function">
    <text evidence="4 7 8 9 10 12">Involved in pre-mRNA splicing as component of the spliceosome (PubMed:11991638, PubMed:28076346, PubMed:28502770, PubMed:28781166, PubMed:32494006). Associated with sn-RNP U2, where it contributes to the binding of stem loop IV of U2 snRNA (PubMed:32494006, PubMed:9716128).</text>
</comment>
<comment type="subunit">
    <text evidence="4 5 7 8 9 10 11 12">Identified in the spliceosome B complex (PubMed:28781166, PubMed:32494006, PubMed:36797247). Identified in the spliceosome C complex (PubMed:11991638, PubMed:28076346, PubMed:28502770, PubMed:32494006, PubMed:36797247). Present in a spliceosome complex assembled in vitro, and composed of SNRPB2, HPRP8BP and CRNKL1 (PubMed:12084575). Contributes to the binding of stem loop IV of U2 snRNA with SNRPP1 (PubMed:9716128).</text>
</comment>
<comment type="interaction">
    <interactant intactId="EBI-1053651">
        <id>P08579</id>
    </interactant>
    <interactant intactId="EBI-3905054">
        <id>P13196</id>
        <label>ALAS1</label>
    </interactant>
    <organismsDiffer>false</organismsDiffer>
    <experiments>3</experiments>
</comment>
<comment type="interaction">
    <interactant intactId="EBI-1053651">
        <id>P08579</id>
    </interactant>
    <interactant intactId="EBI-1054315">
        <id>Q9NX76</id>
        <label>CMTM6</label>
    </interactant>
    <organismsDiffer>false</organismsDiffer>
    <experiments>3</experiments>
</comment>
<comment type="interaction">
    <interactant intactId="EBI-1053651">
        <id>P08579</id>
    </interactant>
    <interactant intactId="EBI-618165">
        <id>Q06547</id>
        <label>GABPB1</label>
    </interactant>
    <organismsDiffer>false</organismsDiffer>
    <experiments>3</experiments>
</comment>
<comment type="interaction">
    <interactant intactId="EBI-1053651">
        <id>P08579</id>
    </interactant>
    <interactant intactId="EBI-8468945">
        <id>Q8TAK5</id>
        <label>GABPB2</label>
    </interactant>
    <organismsDiffer>false</organismsDiffer>
    <experiments>3</experiments>
</comment>
<comment type="interaction">
    <interactant intactId="EBI-1053651">
        <id>P08579</id>
    </interactant>
    <interactant intactId="EBI-618309">
        <id>Q08379</id>
        <label>GOLGA2</label>
    </interactant>
    <organismsDiffer>false</organismsDiffer>
    <experiments>3</experiments>
</comment>
<comment type="interaction">
    <interactant intactId="EBI-1053651">
        <id>P08579</id>
    </interactant>
    <interactant intactId="EBI-2549423">
        <id>Q6NT76</id>
        <label>HMBOX1</label>
    </interactant>
    <organismsDiffer>false</organismsDiffer>
    <experiments>3</experiments>
</comment>
<comment type="interaction">
    <interactant intactId="EBI-1053651">
        <id>P08579</id>
    </interactant>
    <interactant intactId="EBI-10172004">
        <id>Q8IX15-3</id>
        <label>HOMEZ</label>
    </interactant>
    <organismsDiffer>false</organismsDiffer>
    <experiments>3</experiments>
</comment>
<comment type="interaction">
    <interactant intactId="EBI-1053651">
        <id>P08579</id>
    </interactant>
    <interactant intactId="EBI-374900">
        <id>Q14566</id>
        <label>MCM6</label>
    </interactant>
    <organismsDiffer>false</organismsDiffer>
    <experiments>3</experiments>
</comment>
<comment type="interaction">
    <interactant intactId="EBI-1053651">
        <id>P08579</id>
    </interactant>
    <interactant intactId="EBI-742948">
        <id>Q5JR59</id>
        <label>MTUS2</label>
    </interactant>
    <organismsDiffer>false</organismsDiffer>
    <experiments>3</experiments>
</comment>
<comment type="interaction">
    <interactant intactId="EBI-1053651">
        <id>P08579</id>
    </interactant>
    <interactant intactId="EBI-713627">
        <id>Q96NT1</id>
        <label>NAP1L5</label>
    </interactant>
    <organismsDiffer>false</organismsDiffer>
    <experiments>3</experiments>
</comment>
<comment type="interaction">
    <interactant intactId="EBI-1053651">
        <id>P08579</id>
    </interactant>
    <interactant intactId="EBI-79165">
        <id>Q9NRD5</id>
        <label>PICK1</label>
    </interactant>
    <organismsDiffer>false</organismsDiffer>
    <experiments>3</experiments>
</comment>
<comment type="interaction">
    <interactant intactId="EBI-1053651">
        <id>P08579</id>
    </interactant>
    <interactant intactId="EBI-302345">
        <id>Q8ND90</id>
        <label>PNMA1</label>
    </interactant>
    <organismsDiffer>false</organismsDiffer>
    <experiments>5</experiments>
</comment>
<comment type="interaction">
    <interactant intactId="EBI-1053651">
        <id>P08579</id>
    </interactant>
    <interactant intactId="EBI-2462271">
        <id>Q15428</id>
        <label>SF3A2</label>
    </interactant>
    <organismsDiffer>false</organismsDiffer>
    <experiments>7</experiments>
</comment>
<comment type="interaction">
    <interactant intactId="EBI-1053651">
        <id>P08579</id>
    </interactant>
    <interactant intactId="EBI-876439">
        <id>P09661</id>
        <label>SNRPA1</label>
    </interactant>
    <organismsDiffer>false</organismsDiffer>
    <experiments>10</experiments>
</comment>
<comment type="interaction">
    <interactant intactId="EBI-1053651">
        <id>P08579</id>
    </interactant>
    <interactant intactId="EBI-372789">
        <id>P62318</id>
        <label>SNRPD3</label>
    </interactant>
    <organismsDiffer>false</organismsDiffer>
    <experiments>3</experiments>
</comment>
<comment type="interaction">
    <interactant intactId="EBI-1053651">
        <id>P08579</id>
    </interactant>
    <interactant intactId="EBI-740098">
        <id>P36406</id>
        <label>TRIM23</label>
    </interactant>
    <organismsDiffer>false</organismsDiffer>
    <experiments>3</experiments>
</comment>
<comment type="interaction">
    <interactant intactId="EBI-1053651">
        <id>P08579</id>
    </interactant>
    <interactant intactId="EBI-719493">
        <id>P14373</id>
        <label>TRIM27</label>
    </interactant>
    <organismsDiffer>false</organismsDiffer>
    <experiments>6</experiments>
</comment>
<comment type="interaction">
    <interactant intactId="EBI-1053651">
        <id>P08579</id>
    </interactant>
    <interactant intactId="EBI-10176632">
        <id>O43829</id>
        <label>ZBTB14</label>
    </interactant>
    <organismsDiffer>false</organismsDiffer>
    <experiments>6</experiments>
</comment>
<comment type="subcellular location">
    <subcellularLocation>
        <location evidence="7 8 9">Nucleus</location>
    </subcellularLocation>
</comment>
<comment type="miscellaneous">
    <text>Patients with systemic lupus erythematosus produce antibodies which interact with snRNP proteins.</text>
</comment>
<comment type="similarity">
    <text evidence="13">Belongs to the RRM U1 A/B'' family.</text>
</comment>
<organism>
    <name type="scientific">Homo sapiens</name>
    <name type="common">Human</name>
    <dbReference type="NCBI Taxonomy" id="9606"/>
    <lineage>
        <taxon>Eukaryota</taxon>
        <taxon>Metazoa</taxon>
        <taxon>Chordata</taxon>
        <taxon>Craniata</taxon>
        <taxon>Vertebrata</taxon>
        <taxon>Euteleostomi</taxon>
        <taxon>Mammalia</taxon>
        <taxon>Eutheria</taxon>
        <taxon>Euarchontoglires</taxon>
        <taxon>Primates</taxon>
        <taxon>Haplorrhini</taxon>
        <taxon>Catarrhini</taxon>
        <taxon>Hominidae</taxon>
        <taxon>Homo</taxon>
    </lineage>
</organism>
<gene>
    <name type="primary">SNRPB2</name>
</gene>
<reference key="1">
    <citation type="journal article" date="1987" name="Proc. Natl. Acad. Sci. U.S.A.">
        <title>Analysis of a cDNA clone expressing a human autoimmune antigen: full-length sequence of the U2 small nuclear RNA-associated B' antigen.</title>
        <authorList>
            <person name="Habets W.J."/>
            <person name="Sillekens P.T.G."/>
            <person name="Hoet M.H."/>
            <person name="Schalken J.A."/>
            <person name="Roebroek A.J.M."/>
            <person name="Leunissen J.A.M."/>
            <person name="de Ven W.J.M."/>
            <person name="van Venrooij W.J."/>
        </authorList>
    </citation>
    <scope>NUCLEOTIDE SEQUENCE [MRNA]</scope>
</reference>
<reference key="2">
    <citation type="journal article" date="2004" name="Nat. Genet.">
        <title>Complete sequencing and characterization of 21,243 full-length human cDNAs.</title>
        <authorList>
            <person name="Ota T."/>
            <person name="Suzuki Y."/>
            <person name="Nishikawa T."/>
            <person name="Otsuki T."/>
            <person name="Sugiyama T."/>
            <person name="Irie R."/>
            <person name="Wakamatsu A."/>
            <person name="Hayashi K."/>
            <person name="Sato H."/>
            <person name="Nagai K."/>
            <person name="Kimura K."/>
            <person name="Makita H."/>
            <person name="Sekine M."/>
            <person name="Obayashi M."/>
            <person name="Nishi T."/>
            <person name="Shibahara T."/>
            <person name="Tanaka T."/>
            <person name="Ishii S."/>
            <person name="Yamamoto J."/>
            <person name="Saito K."/>
            <person name="Kawai Y."/>
            <person name="Isono Y."/>
            <person name="Nakamura Y."/>
            <person name="Nagahari K."/>
            <person name="Murakami K."/>
            <person name="Yasuda T."/>
            <person name="Iwayanagi T."/>
            <person name="Wagatsuma M."/>
            <person name="Shiratori A."/>
            <person name="Sudo H."/>
            <person name="Hosoiri T."/>
            <person name="Kaku Y."/>
            <person name="Kodaira H."/>
            <person name="Kondo H."/>
            <person name="Sugawara M."/>
            <person name="Takahashi M."/>
            <person name="Kanda K."/>
            <person name="Yokoi T."/>
            <person name="Furuya T."/>
            <person name="Kikkawa E."/>
            <person name="Omura Y."/>
            <person name="Abe K."/>
            <person name="Kamihara K."/>
            <person name="Katsuta N."/>
            <person name="Sato K."/>
            <person name="Tanikawa M."/>
            <person name="Yamazaki M."/>
            <person name="Ninomiya K."/>
            <person name="Ishibashi T."/>
            <person name="Yamashita H."/>
            <person name="Murakawa K."/>
            <person name="Fujimori K."/>
            <person name="Tanai H."/>
            <person name="Kimata M."/>
            <person name="Watanabe M."/>
            <person name="Hiraoka S."/>
            <person name="Chiba Y."/>
            <person name="Ishida S."/>
            <person name="Ono Y."/>
            <person name="Takiguchi S."/>
            <person name="Watanabe S."/>
            <person name="Yosida M."/>
            <person name="Hotuta T."/>
            <person name="Kusano J."/>
            <person name="Kanehori K."/>
            <person name="Takahashi-Fujii A."/>
            <person name="Hara H."/>
            <person name="Tanase T.-O."/>
            <person name="Nomura Y."/>
            <person name="Togiya S."/>
            <person name="Komai F."/>
            <person name="Hara R."/>
            <person name="Takeuchi K."/>
            <person name="Arita M."/>
            <person name="Imose N."/>
            <person name="Musashino K."/>
            <person name="Yuuki H."/>
            <person name="Oshima A."/>
            <person name="Sasaki N."/>
            <person name="Aotsuka S."/>
            <person name="Yoshikawa Y."/>
            <person name="Matsunawa H."/>
            <person name="Ichihara T."/>
            <person name="Shiohata N."/>
            <person name="Sano S."/>
            <person name="Moriya S."/>
            <person name="Momiyama H."/>
            <person name="Satoh N."/>
            <person name="Takami S."/>
            <person name="Terashima Y."/>
            <person name="Suzuki O."/>
            <person name="Nakagawa S."/>
            <person name="Senoh A."/>
            <person name="Mizoguchi H."/>
            <person name="Goto Y."/>
            <person name="Shimizu F."/>
            <person name="Wakebe H."/>
            <person name="Hishigaki H."/>
            <person name="Watanabe T."/>
            <person name="Sugiyama A."/>
            <person name="Takemoto M."/>
            <person name="Kawakami B."/>
            <person name="Yamazaki M."/>
            <person name="Watanabe K."/>
            <person name="Kumagai A."/>
            <person name="Itakura S."/>
            <person name="Fukuzumi Y."/>
            <person name="Fujimori Y."/>
            <person name="Komiyama M."/>
            <person name="Tashiro H."/>
            <person name="Tanigami A."/>
            <person name="Fujiwara T."/>
            <person name="Ono T."/>
            <person name="Yamada K."/>
            <person name="Fujii Y."/>
            <person name="Ozaki K."/>
            <person name="Hirao M."/>
            <person name="Ohmori Y."/>
            <person name="Kawabata A."/>
            <person name="Hikiji T."/>
            <person name="Kobatake N."/>
            <person name="Inagaki H."/>
            <person name="Ikema Y."/>
            <person name="Okamoto S."/>
            <person name="Okitani R."/>
            <person name="Kawakami T."/>
            <person name="Noguchi S."/>
            <person name="Itoh T."/>
            <person name="Shigeta K."/>
            <person name="Senba T."/>
            <person name="Matsumura K."/>
            <person name="Nakajima Y."/>
            <person name="Mizuno T."/>
            <person name="Morinaga M."/>
            <person name="Sasaki M."/>
            <person name="Togashi T."/>
            <person name="Oyama M."/>
            <person name="Hata H."/>
            <person name="Watanabe M."/>
            <person name="Komatsu T."/>
            <person name="Mizushima-Sugano J."/>
            <person name="Satoh T."/>
            <person name="Shirai Y."/>
            <person name="Takahashi Y."/>
            <person name="Nakagawa K."/>
            <person name="Okumura K."/>
            <person name="Nagase T."/>
            <person name="Nomura N."/>
            <person name="Kikuchi H."/>
            <person name="Masuho Y."/>
            <person name="Yamashita R."/>
            <person name="Nakai K."/>
            <person name="Yada T."/>
            <person name="Nakamura Y."/>
            <person name="Ohara O."/>
            <person name="Isogai T."/>
            <person name="Sugano S."/>
        </authorList>
    </citation>
    <scope>NUCLEOTIDE SEQUENCE [LARGE SCALE MRNA]</scope>
    <source>
        <tissue>Cerebellum</tissue>
    </source>
</reference>
<reference key="3">
    <citation type="journal article" date="2001" name="Nature">
        <title>The DNA sequence and comparative analysis of human chromosome 20.</title>
        <authorList>
            <person name="Deloukas P."/>
            <person name="Matthews L.H."/>
            <person name="Ashurst J.L."/>
            <person name="Burton J."/>
            <person name="Gilbert J.G.R."/>
            <person name="Jones M."/>
            <person name="Stavrides G."/>
            <person name="Almeida J.P."/>
            <person name="Babbage A.K."/>
            <person name="Bagguley C.L."/>
            <person name="Bailey J."/>
            <person name="Barlow K.F."/>
            <person name="Bates K.N."/>
            <person name="Beard L.M."/>
            <person name="Beare D.M."/>
            <person name="Beasley O.P."/>
            <person name="Bird C.P."/>
            <person name="Blakey S.E."/>
            <person name="Bridgeman A.M."/>
            <person name="Brown A.J."/>
            <person name="Buck D."/>
            <person name="Burrill W.D."/>
            <person name="Butler A.P."/>
            <person name="Carder C."/>
            <person name="Carter N.P."/>
            <person name="Chapman J.C."/>
            <person name="Clamp M."/>
            <person name="Clark G."/>
            <person name="Clark L.N."/>
            <person name="Clark S.Y."/>
            <person name="Clee C.M."/>
            <person name="Clegg S."/>
            <person name="Cobley V.E."/>
            <person name="Collier R.E."/>
            <person name="Connor R.E."/>
            <person name="Corby N.R."/>
            <person name="Coulson A."/>
            <person name="Coville G.J."/>
            <person name="Deadman R."/>
            <person name="Dhami P.D."/>
            <person name="Dunn M."/>
            <person name="Ellington A.G."/>
            <person name="Frankland J.A."/>
            <person name="Fraser A."/>
            <person name="French L."/>
            <person name="Garner P."/>
            <person name="Grafham D.V."/>
            <person name="Griffiths C."/>
            <person name="Griffiths M.N.D."/>
            <person name="Gwilliam R."/>
            <person name="Hall R.E."/>
            <person name="Hammond S."/>
            <person name="Harley J.L."/>
            <person name="Heath P.D."/>
            <person name="Ho S."/>
            <person name="Holden J.L."/>
            <person name="Howden P.J."/>
            <person name="Huckle E."/>
            <person name="Hunt A.R."/>
            <person name="Hunt S.E."/>
            <person name="Jekosch K."/>
            <person name="Johnson C.M."/>
            <person name="Johnson D."/>
            <person name="Kay M.P."/>
            <person name="Kimberley A.M."/>
            <person name="King A."/>
            <person name="Knights A."/>
            <person name="Laird G.K."/>
            <person name="Lawlor S."/>
            <person name="Lehvaeslaiho M.H."/>
            <person name="Leversha M.A."/>
            <person name="Lloyd C."/>
            <person name="Lloyd D.M."/>
            <person name="Lovell J.D."/>
            <person name="Marsh V.L."/>
            <person name="Martin S.L."/>
            <person name="McConnachie L.J."/>
            <person name="McLay K."/>
            <person name="McMurray A.A."/>
            <person name="Milne S.A."/>
            <person name="Mistry D."/>
            <person name="Moore M.J.F."/>
            <person name="Mullikin J.C."/>
            <person name="Nickerson T."/>
            <person name="Oliver K."/>
            <person name="Parker A."/>
            <person name="Patel R."/>
            <person name="Pearce T.A.V."/>
            <person name="Peck A.I."/>
            <person name="Phillimore B.J.C.T."/>
            <person name="Prathalingam S.R."/>
            <person name="Plumb R.W."/>
            <person name="Ramsay H."/>
            <person name="Rice C.M."/>
            <person name="Ross M.T."/>
            <person name="Scott C.E."/>
            <person name="Sehra H.K."/>
            <person name="Shownkeen R."/>
            <person name="Sims S."/>
            <person name="Skuce C.D."/>
            <person name="Smith M.L."/>
            <person name="Soderlund C."/>
            <person name="Steward C.A."/>
            <person name="Sulston J.E."/>
            <person name="Swann R.M."/>
            <person name="Sycamore N."/>
            <person name="Taylor R."/>
            <person name="Tee L."/>
            <person name="Thomas D.W."/>
            <person name="Thorpe A."/>
            <person name="Tracey A."/>
            <person name="Tromans A.C."/>
            <person name="Vaudin M."/>
            <person name="Wall M."/>
            <person name="Wallis J.M."/>
            <person name="Whitehead S.L."/>
            <person name="Whittaker P."/>
            <person name="Willey D.L."/>
            <person name="Williams L."/>
            <person name="Williams S.A."/>
            <person name="Wilming L."/>
            <person name="Wray P.W."/>
            <person name="Hubbard T."/>
            <person name="Durbin R.M."/>
            <person name="Bentley D.R."/>
            <person name="Beck S."/>
            <person name="Rogers J."/>
        </authorList>
    </citation>
    <scope>NUCLEOTIDE SEQUENCE [LARGE SCALE GENOMIC DNA]</scope>
</reference>
<reference key="4">
    <citation type="submission" date="2005-09" db="EMBL/GenBank/DDBJ databases">
        <authorList>
            <person name="Mural R.J."/>
            <person name="Istrail S."/>
            <person name="Sutton G.G."/>
            <person name="Florea L."/>
            <person name="Halpern A.L."/>
            <person name="Mobarry C.M."/>
            <person name="Lippert R."/>
            <person name="Walenz B."/>
            <person name="Shatkay H."/>
            <person name="Dew I."/>
            <person name="Miller J.R."/>
            <person name="Flanigan M.J."/>
            <person name="Edwards N.J."/>
            <person name="Bolanos R."/>
            <person name="Fasulo D."/>
            <person name="Halldorsson B.V."/>
            <person name="Hannenhalli S."/>
            <person name="Turner R."/>
            <person name="Yooseph S."/>
            <person name="Lu F."/>
            <person name="Nusskern D.R."/>
            <person name="Shue B.C."/>
            <person name="Zheng X.H."/>
            <person name="Zhong F."/>
            <person name="Delcher A.L."/>
            <person name="Huson D.H."/>
            <person name="Kravitz S.A."/>
            <person name="Mouchard L."/>
            <person name="Reinert K."/>
            <person name="Remington K.A."/>
            <person name="Clark A.G."/>
            <person name="Waterman M.S."/>
            <person name="Eichler E.E."/>
            <person name="Adams M.D."/>
            <person name="Hunkapiller M.W."/>
            <person name="Myers E.W."/>
            <person name="Venter J.C."/>
        </authorList>
    </citation>
    <scope>NUCLEOTIDE SEQUENCE [LARGE SCALE GENOMIC DNA]</scope>
</reference>
<reference key="5">
    <citation type="journal article" date="2004" name="Genome Res.">
        <title>The status, quality, and expansion of the NIH full-length cDNA project: the Mammalian Gene Collection (MGC).</title>
        <authorList>
            <consortium name="The MGC Project Team"/>
        </authorList>
    </citation>
    <scope>NUCLEOTIDE SEQUENCE [LARGE SCALE MRNA]</scope>
    <source>
        <tissue>Brain</tissue>
        <tissue>Uterus</tissue>
    </source>
</reference>
<reference key="6">
    <citation type="journal article" date="2002" name="Biochim. Biophys. Acta">
        <title>Crooked neck is a component of the human spliceosome and implicated in the splicing process.</title>
        <authorList>
            <person name="Chung S."/>
            <person name="Zhou Z."/>
            <person name="Huddleston K.A."/>
            <person name="Harrison D.A."/>
            <person name="Reed R."/>
            <person name="Coleman T.A."/>
            <person name="Rymond B.C."/>
        </authorList>
    </citation>
    <scope>IDENTIFICATION IN SPLICEOSOMAL COMPLEX WITH HPRP8BP AND CRNKL1</scope>
</reference>
<reference key="7">
    <citation type="journal article" date="2002" name="RNA">
        <title>Purification and characterization of native spliceosomes suitable for three-dimensional structural analysis.</title>
        <authorList>
            <person name="Jurica M.S."/>
            <person name="Licklider L.J."/>
            <person name="Gygi S.P."/>
            <person name="Grigorieff N."/>
            <person name="Moore M.J."/>
        </authorList>
    </citation>
    <scope>IDENTIFICATION BY MASS SPECTROMETRY</scope>
    <scope>IDENTIFICATION IN THE SPLICEOSOMAL C COMPLEX</scope>
</reference>
<reference key="8">
    <citation type="journal article" date="2003" name="Nature">
        <title>Proteomic characterization of the human centrosome by protein correlation profiling.</title>
        <authorList>
            <person name="Andersen J.S."/>
            <person name="Wilkinson C.J."/>
            <person name="Mayor T."/>
            <person name="Mortensen P."/>
            <person name="Nigg E.A."/>
            <person name="Mann M."/>
        </authorList>
    </citation>
    <scope>IDENTIFICATION BY MASS SPECTROMETRY</scope>
    <source>
        <tissue>Lymphoblast</tissue>
    </source>
</reference>
<reference key="9">
    <citation type="journal article" date="2005" name="Nat. Biotechnol.">
        <title>Immunoaffinity profiling of tyrosine phosphorylation in cancer cells.</title>
        <authorList>
            <person name="Rush J."/>
            <person name="Moritz A."/>
            <person name="Lee K.A."/>
            <person name="Guo A."/>
            <person name="Goss V.L."/>
            <person name="Spek E.J."/>
            <person name="Zhang H."/>
            <person name="Zha X.-M."/>
            <person name="Polakiewicz R.D."/>
            <person name="Comb M.J."/>
        </authorList>
    </citation>
    <scope>PHOSPHORYLATION [LARGE SCALE ANALYSIS] AT TYR-151</scope>
    <scope>IDENTIFICATION BY MASS SPECTROMETRY [LARGE SCALE ANALYSIS]</scope>
</reference>
<reference key="10">
    <citation type="journal article" date="2011" name="BMC Syst. Biol.">
        <title>Initial characterization of the human central proteome.</title>
        <authorList>
            <person name="Burkard T.R."/>
            <person name="Planyavsky M."/>
            <person name="Kaupe I."/>
            <person name="Breitwieser F.P."/>
            <person name="Buerckstuemmer T."/>
            <person name="Bennett K.L."/>
            <person name="Superti-Furga G."/>
            <person name="Colinge J."/>
        </authorList>
    </citation>
    <scope>IDENTIFICATION BY MASS SPECTROMETRY [LARGE SCALE ANALYSIS]</scope>
</reference>
<reference key="11">
    <citation type="journal article" date="2017" name="Nat. Struct. Mol. Biol.">
        <title>Site-specific mapping of the human SUMO proteome reveals co-modification with phosphorylation.</title>
        <authorList>
            <person name="Hendriks I.A."/>
            <person name="Lyon D."/>
            <person name="Young C."/>
            <person name="Jensen L.J."/>
            <person name="Vertegaal A.C."/>
            <person name="Nielsen M.L."/>
        </authorList>
    </citation>
    <scope>SUMOYLATION [LARGE SCALE ANALYSIS] AT LYS-111</scope>
    <scope>IDENTIFICATION BY MASS SPECTROMETRY [LARGE SCALE ANALYSIS]</scope>
</reference>
<reference key="12">
    <citation type="journal article" date="1998" name="Nature">
        <title>Crystal structure of the spliceosomal U2B'-U2A' protein complex bound to a fragment of U2 small nuclear RNA.</title>
        <authorList>
            <person name="Price S.R."/>
            <person name="Evans P.R."/>
            <person name="Nagai K."/>
        </authorList>
    </citation>
    <scope>X-RAY CRYSTALLOGRAPHY (2.38 ANGSTROMS) OF 1-96 IN COMPLEX WITH SNRPA1 AND U2 SMALL NUCLEAR RNA</scope>
    <scope>SUBUNIT</scope>
    <scope>FUNCTION</scope>
</reference>
<reference evidence="16" key="13">
    <citation type="journal article" date="2017" name="Cell">
        <title>An Atomic Structure of the Human Spliceosome.</title>
        <authorList>
            <person name="Zhang X."/>
            <person name="Yan C."/>
            <person name="Hang J."/>
            <person name="Finci L.I."/>
            <person name="Lei J."/>
            <person name="Shi Y."/>
        </authorList>
    </citation>
    <scope>STRUCTURE BY ELECTRON MICROSCOPY (3.60 ANGSTROMS)</scope>
    <scope>FUNCTION</scope>
    <scope>SUBUNIT</scope>
    <scope>SUBCELLULAR LOCATION</scope>
</reference>
<reference evidence="15" key="14">
    <citation type="journal article" date="2017" name="Cell">
        <title>Cryo-EM Structure of a Pre-catalytic Human Spliceosome Primed for Activation.</title>
        <authorList>
            <person name="Bertram K."/>
            <person name="Agafonov D.E."/>
            <person name="Dybkov O."/>
            <person name="Haselbach D."/>
            <person name="Leelaram M.N."/>
            <person name="Will C.L."/>
            <person name="Urlaub H."/>
            <person name="Kastner B."/>
            <person name="Luhrmann R."/>
            <person name="Stark H."/>
        </authorList>
    </citation>
    <scope>STRUCTURE BY ELECTRON MICROSCOPY (4.50 ANGSTROMS)</scope>
    <scope>FUNCTION</scope>
    <scope>IDENTIFICATION BY MASS SPECTROMETRY</scope>
    <scope>SUBCELLULAR LOCATION</scope>
    <scope>SUBUNIT</scope>
</reference>
<reference evidence="14" key="15">
    <citation type="journal article" date="2017" name="Nature">
        <title>Cryo-EM structure of a human spliceosome activated for step 2 of splicing.</title>
        <authorList>
            <person name="Bertram K."/>
            <person name="Agafonov D.E."/>
            <person name="Liu W.T."/>
            <person name="Dybkov O."/>
            <person name="Will C.L."/>
            <person name="Hartmuth K."/>
            <person name="Urlaub H."/>
            <person name="Kastner B."/>
            <person name="Stark H."/>
            <person name="Luhrmann R."/>
        </authorList>
    </citation>
    <scope>STRUCTURE BY ELECTRON MICROSCOPY (5.90 ANGSTROMS)</scope>
    <scope>FUNCTION</scope>
    <scope>SUBUNIT</scope>
    <scope>SUBCELLULAR LOCATION</scope>
    <scope>IDENTIFICATION BY MASS SPECTROMETRY</scope>
</reference>
<reference evidence="17" key="16">
    <citation type="journal article" date="2020" name="Nature">
        <title>Molecular architecture of the human 17S U2 snRNP.</title>
        <authorList>
            <person name="Zhang Z."/>
            <person name="Will C.L."/>
            <person name="Bertram K."/>
            <person name="Dybkov O."/>
            <person name="Hartmuth K."/>
            <person name="Agafonov D.E."/>
            <person name="Hofele R."/>
            <person name="Urlaub H."/>
            <person name="Kastner B."/>
            <person name="Luehrmann R."/>
            <person name="Stark H."/>
        </authorList>
    </citation>
    <scope>STRUCTURE BY ELECTRON MICROSCOPY (4.10 ANGSTROMS) IN COMPLEX WITH THE 17S U2 SNRNP COMPLEX</scope>
    <scope>FUNCTION</scope>
    <scope>IDENTIFICATION IN THE 17S U2 SNRNP COMPLEX</scope>
</reference>
<reference evidence="18" key="17">
    <citation type="journal article" date="2023" name="Nat. Commun.">
        <title>Mechanisms of the RNA helicases DDX42 and DDX46 in human U2 snRNP assembly.</title>
        <authorList>
            <person name="Yang F."/>
            <person name="Bian T."/>
            <person name="Zhan X."/>
            <person name="Chen Z."/>
            <person name="Xing Z."/>
            <person name="Larsen N.A."/>
            <person name="Zhang X."/>
            <person name="Shi Y."/>
        </authorList>
    </citation>
    <scope>STRUCTURE BY ELECTRON MICROSCOPY (2.70 ANGSTROMS) IN COMPLEX WITH THE 17S U2 SNRNP COMPLEX</scope>
    <scope>IDENTIFICATION IN THE 17S U2 SNRNP COMPLEX</scope>
</reference>
<reference key="18">
    <citation type="journal article" date="2006" name="Science">
        <title>The consensus coding sequences of human breast and colorectal cancers.</title>
        <authorList>
            <person name="Sjoeblom T."/>
            <person name="Jones S."/>
            <person name="Wood L.D."/>
            <person name="Parsons D.W."/>
            <person name="Lin J."/>
            <person name="Barber T.D."/>
            <person name="Mandelker D."/>
            <person name="Leary R.J."/>
            <person name="Ptak J."/>
            <person name="Silliman N."/>
            <person name="Szabo S."/>
            <person name="Buckhaults P."/>
            <person name="Farrell C."/>
            <person name="Meeh P."/>
            <person name="Markowitz S.D."/>
            <person name="Willis J."/>
            <person name="Dawson D."/>
            <person name="Willson J.K.V."/>
            <person name="Gazdar A.F."/>
            <person name="Hartigan J."/>
            <person name="Wu L."/>
            <person name="Liu C."/>
            <person name="Parmigiani G."/>
            <person name="Park B.H."/>
            <person name="Bachman K.E."/>
            <person name="Papadopoulos N."/>
            <person name="Vogelstein B."/>
            <person name="Kinzler K.W."/>
            <person name="Velculescu V.E."/>
        </authorList>
    </citation>
    <scope>VARIANT [LARGE SCALE ANALYSIS] GLN-19</scope>
</reference>
<keyword id="KW-0002">3D-structure</keyword>
<keyword id="KW-0007">Acetylation</keyword>
<keyword id="KW-1017">Isopeptide bond</keyword>
<keyword id="KW-0507">mRNA processing</keyword>
<keyword id="KW-0508">mRNA splicing</keyword>
<keyword id="KW-0539">Nucleus</keyword>
<keyword id="KW-0597">Phosphoprotein</keyword>
<keyword id="KW-1267">Proteomics identification</keyword>
<keyword id="KW-1185">Reference proteome</keyword>
<keyword id="KW-0677">Repeat</keyword>
<keyword id="KW-0687">Ribonucleoprotein</keyword>
<keyword id="KW-0694">RNA-binding</keyword>
<keyword id="KW-0747">Spliceosome</keyword>
<keyword id="KW-0832">Ubl conjugation</keyword>
<accession>P08579</accession>
<accession>B2R7J3</accession>
<accession>D3DW21</accession>
<accession>Q9UJD4</accession>
<protein>
    <recommendedName>
        <fullName>U2 small nuclear ribonucleoprotein B''</fullName>
        <shortName>U2 snRNP B''</shortName>
    </recommendedName>
</protein>
<feature type="chain" id="PRO_0000081892" description="U2 small nuclear ribonucleoprotein B''">
    <location>
        <begin position="1"/>
        <end position="225"/>
    </location>
</feature>
<feature type="domain" description="RRM 1" evidence="2">
    <location>
        <begin position="7"/>
        <end position="86"/>
    </location>
</feature>
<feature type="domain" description="RRM 2" evidence="2">
    <location>
        <begin position="151"/>
        <end position="225"/>
    </location>
</feature>
<feature type="region of interest" description="Disordered" evidence="3">
    <location>
        <begin position="99"/>
        <end position="145"/>
    </location>
</feature>
<feature type="compositionally biased region" description="Low complexity" evidence="3">
    <location>
        <begin position="113"/>
        <end position="123"/>
    </location>
</feature>
<feature type="compositionally biased region" description="Polar residues" evidence="3">
    <location>
        <begin position="127"/>
        <end position="141"/>
    </location>
</feature>
<feature type="modified residue" description="N6-acetyllysine; alternate" evidence="1">
    <location>
        <position position="111"/>
    </location>
</feature>
<feature type="modified residue" description="Phosphotyrosine" evidence="19">
    <location>
        <position position="151"/>
    </location>
</feature>
<feature type="cross-link" description="Glycyl lysine isopeptide (Lys-Gly) (interchain with G-Cter in SUMO2); alternate" evidence="20">
    <location>
        <position position="111"/>
    </location>
</feature>
<feature type="sequence variant" id="VAR_035487" description="In a colorectal cancer sample; somatic mutation." evidence="6">
    <original>K</original>
    <variation>Q</variation>
    <location>
        <position position="19"/>
    </location>
</feature>
<feature type="strand" evidence="21">
    <location>
        <begin position="7"/>
        <end position="13"/>
    </location>
</feature>
<feature type="strand" evidence="22">
    <location>
        <begin position="16"/>
        <end position="18"/>
    </location>
</feature>
<feature type="helix" evidence="21">
    <location>
        <begin position="20"/>
        <end position="32"/>
    </location>
</feature>
<feature type="strand" evidence="21">
    <location>
        <begin position="37"/>
        <end position="41"/>
    </location>
</feature>
<feature type="turn" evidence="21">
    <location>
        <begin position="46"/>
        <end position="50"/>
    </location>
</feature>
<feature type="strand" evidence="21">
    <location>
        <begin position="52"/>
        <end position="58"/>
    </location>
</feature>
<feature type="helix" evidence="21">
    <location>
        <begin position="59"/>
        <end position="68"/>
    </location>
</feature>
<feature type="turn" evidence="22">
    <location>
        <begin position="69"/>
        <end position="71"/>
    </location>
</feature>
<feature type="strand" evidence="21">
    <location>
        <begin position="80"/>
        <end position="83"/>
    </location>
</feature>
<feature type="helix" evidence="21">
    <location>
        <begin position="89"/>
        <end position="95"/>
    </location>
</feature>
<feature type="strand" evidence="22">
    <location>
        <begin position="151"/>
        <end position="157"/>
    </location>
</feature>
<feature type="helix" evidence="22">
    <location>
        <begin position="164"/>
        <end position="171"/>
    </location>
</feature>
<feature type="strand" evidence="22">
    <location>
        <begin position="177"/>
        <end position="181"/>
    </location>
</feature>
<feature type="strand" evidence="22">
    <location>
        <begin position="189"/>
        <end position="196"/>
    </location>
</feature>
<feature type="helix" evidence="22">
    <location>
        <begin position="197"/>
        <end position="206"/>
    </location>
</feature>
<feature type="strand" evidence="22">
    <location>
        <begin position="219"/>
        <end position="222"/>
    </location>
</feature>
<evidence type="ECO:0000250" key="1">
    <source>
        <dbReference type="UniProtKB" id="Q9CQI7"/>
    </source>
</evidence>
<evidence type="ECO:0000255" key="2">
    <source>
        <dbReference type="PROSITE-ProRule" id="PRU00176"/>
    </source>
</evidence>
<evidence type="ECO:0000256" key="3">
    <source>
        <dbReference type="SAM" id="MobiDB-lite"/>
    </source>
</evidence>
<evidence type="ECO:0000269" key="4">
    <source>
    </source>
</evidence>
<evidence type="ECO:0000269" key="5">
    <source>
    </source>
</evidence>
<evidence type="ECO:0000269" key="6">
    <source>
    </source>
</evidence>
<evidence type="ECO:0000269" key="7">
    <source>
    </source>
</evidence>
<evidence type="ECO:0000269" key="8">
    <source>
    </source>
</evidence>
<evidence type="ECO:0000269" key="9">
    <source>
    </source>
</evidence>
<evidence type="ECO:0000269" key="10">
    <source>
    </source>
</evidence>
<evidence type="ECO:0000269" key="11">
    <source>
    </source>
</evidence>
<evidence type="ECO:0000269" key="12">
    <source>
    </source>
</evidence>
<evidence type="ECO:0000305" key="13"/>
<evidence type="ECO:0007744" key="14">
    <source>
        <dbReference type="PDB" id="5MQF"/>
    </source>
</evidence>
<evidence type="ECO:0007744" key="15">
    <source>
        <dbReference type="PDB" id="5O9Z"/>
    </source>
</evidence>
<evidence type="ECO:0007744" key="16">
    <source>
        <dbReference type="PDB" id="5XJC"/>
    </source>
</evidence>
<evidence type="ECO:0007744" key="17">
    <source>
        <dbReference type="PDB" id="6Y5Q"/>
    </source>
</evidence>
<evidence type="ECO:0007744" key="18">
    <source>
        <dbReference type="PDB" id="8HK1"/>
    </source>
</evidence>
<evidence type="ECO:0007744" key="19">
    <source>
    </source>
</evidence>
<evidence type="ECO:0007744" key="20">
    <source>
    </source>
</evidence>
<evidence type="ECO:0007829" key="21">
    <source>
        <dbReference type="PDB" id="1A9N"/>
    </source>
</evidence>
<evidence type="ECO:0007829" key="22">
    <source>
        <dbReference type="PDB" id="7EVO"/>
    </source>
</evidence>